<comment type="function">
    <text evidence="1">Component of LSm protein complexes, which are involved in RNA processing and may function in a chaperone-like manner, facilitating the efficient association of RNA processing factors with their substrates. Component of the cytoplasmic LSM1-LSM7 complex, which is thought to be involved in mRNA degradation by activating the decapping step in the 5'-to-3' mRNA decay pathway. Component of the nuclear LSM2-LSM8 complex, which is involved in splicing of nuclear mRNAs. LSM2-LSM8 associates with multiple snRNP complexes containing the U6 snRNA (U4/U6 di-snRNP, spliceosomal U4/U6.U5 tri-snRNP, and free U6 snRNP). It binds directly to the 3'-terminal U-tract of U6 snRNA and plays a role in the biogenesis and stability of the U6 snRNP and U4/U6 snRNP complexes. LSM2-LSM8 probably also is involved degradation of nuclear pre-mRNA by targeting them for decapping, and in processing of pre-tRNAs, pre-rRNAs and U3 snoRNA (By similarity).</text>
</comment>
<comment type="subunit">
    <text evidence="1">Component of the heptameric LSM1-LSM7 complex, which consists of lsm1, lsm2, lsm3, lsm4, lsm5, lsm6 and lsm7. Component of the heptameric LSM2-LSM8 complex, which consists of lsm2, lsm3, lsm4, lsm5, lsm6, lsm7 and lsm8. The LSm subunits form a seven-membered ring structure with a doughnut shape (By similarity).</text>
</comment>
<comment type="subcellular location">
    <subcellularLocation>
        <location evidence="1">Cytoplasm</location>
    </subcellularLocation>
    <subcellularLocation>
        <location evidence="1">Nucleus</location>
    </subcellularLocation>
</comment>
<comment type="similarity">
    <text evidence="3">Belongs to the snRNP Sm proteins family. SmF/LSm6 subfamily.</text>
</comment>
<comment type="sequence caution" evidence="3">
    <conflict type="erroneous gene model prediction">
        <sequence resource="EMBL-CDS" id="EDN98045"/>
    </conflict>
</comment>
<evidence type="ECO:0000250" key="1"/>
<evidence type="ECO:0000255" key="2">
    <source>
        <dbReference type="PROSITE-ProRule" id="PRU01346"/>
    </source>
</evidence>
<evidence type="ECO:0000305" key="3"/>
<reference key="1">
    <citation type="journal article" date="2011" name="PLoS Genet.">
        <title>Genomic analysis of the necrotrophic fungal pathogens Sclerotinia sclerotiorum and Botrytis cinerea.</title>
        <authorList>
            <person name="Amselem J."/>
            <person name="Cuomo C.A."/>
            <person name="van Kan J.A.L."/>
            <person name="Viaud M."/>
            <person name="Benito E.P."/>
            <person name="Couloux A."/>
            <person name="Coutinho P.M."/>
            <person name="de Vries R.P."/>
            <person name="Dyer P.S."/>
            <person name="Fillinger S."/>
            <person name="Fournier E."/>
            <person name="Gout L."/>
            <person name="Hahn M."/>
            <person name="Kohn L."/>
            <person name="Lapalu N."/>
            <person name="Plummer K.M."/>
            <person name="Pradier J.-M."/>
            <person name="Quevillon E."/>
            <person name="Sharon A."/>
            <person name="Simon A."/>
            <person name="ten Have A."/>
            <person name="Tudzynski B."/>
            <person name="Tudzynski P."/>
            <person name="Wincker P."/>
            <person name="Andrew M."/>
            <person name="Anthouard V."/>
            <person name="Beever R.E."/>
            <person name="Beffa R."/>
            <person name="Benoit I."/>
            <person name="Bouzid O."/>
            <person name="Brault B."/>
            <person name="Chen Z."/>
            <person name="Choquer M."/>
            <person name="Collemare J."/>
            <person name="Cotton P."/>
            <person name="Danchin E.G."/>
            <person name="Da Silva C."/>
            <person name="Gautier A."/>
            <person name="Giraud C."/>
            <person name="Giraud T."/>
            <person name="Gonzalez C."/>
            <person name="Grossetete S."/>
            <person name="Gueldener U."/>
            <person name="Henrissat B."/>
            <person name="Howlett B.J."/>
            <person name="Kodira C."/>
            <person name="Kretschmer M."/>
            <person name="Lappartient A."/>
            <person name="Leroch M."/>
            <person name="Levis C."/>
            <person name="Mauceli E."/>
            <person name="Neuveglise C."/>
            <person name="Oeser B."/>
            <person name="Pearson M."/>
            <person name="Poulain J."/>
            <person name="Poussereau N."/>
            <person name="Quesneville H."/>
            <person name="Rascle C."/>
            <person name="Schumacher J."/>
            <person name="Segurens B."/>
            <person name="Sexton A."/>
            <person name="Silva E."/>
            <person name="Sirven C."/>
            <person name="Soanes D.M."/>
            <person name="Talbot N.J."/>
            <person name="Templeton M."/>
            <person name="Yandava C."/>
            <person name="Yarden O."/>
            <person name="Zeng Q."/>
            <person name="Rollins J.A."/>
            <person name="Lebrun M.-H."/>
            <person name="Dickman M."/>
        </authorList>
    </citation>
    <scope>NUCLEOTIDE SEQUENCE [LARGE SCALE GENOMIC DNA]</scope>
    <source>
        <strain>ATCC 18683 / 1980 / Ss-1</strain>
    </source>
</reference>
<organism>
    <name type="scientific">Sclerotinia sclerotiorum (strain ATCC 18683 / 1980 / Ss-1)</name>
    <name type="common">White mold</name>
    <name type="synonym">Whetzelinia sclerotiorum</name>
    <dbReference type="NCBI Taxonomy" id="665079"/>
    <lineage>
        <taxon>Eukaryota</taxon>
        <taxon>Fungi</taxon>
        <taxon>Dikarya</taxon>
        <taxon>Ascomycota</taxon>
        <taxon>Pezizomycotina</taxon>
        <taxon>Leotiomycetes</taxon>
        <taxon>Helotiales</taxon>
        <taxon>Sclerotiniaceae</taxon>
        <taxon>Sclerotinia</taxon>
    </lineage>
</organism>
<accession>A7F5M4</accession>
<keyword id="KW-0963">Cytoplasm</keyword>
<keyword id="KW-0507">mRNA processing</keyword>
<keyword id="KW-0508">mRNA splicing</keyword>
<keyword id="KW-0539">Nucleus</keyword>
<keyword id="KW-1185">Reference proteome</keyword>
<keyword id="KW-0687">Ribonucleoprotein</keyword>
<keyword id="KW-0694">RNA-binding</keyword>
<keyword id="KW-0698">rRNA processing</keyword>
<keyword id="KW-0747">Spliceosome</keyword>
<keyword id="KW-0819">tRNA processing</keyword>
<feature type="chain" id="PRO_0000333604" description="U6 snRNA-associated Sm-like protein LSm6">
    <location>
        <begin position="1"/>
        <end position="85"/>
    </location>
</feature>
<feature type="domain" description="Sm" evidence="2">
    <location>
        <begin position="13"/>
        <end position="85"/>
    </location>
</feature>
<proteinExistence type="inferred from homology"/>
<protein>
    <recommendedName>
        <fullName>U6 snRNA-associated Sm-like protein LSm6</fullName>
    </recommendedName>
</protein>
<sequence length="85" mass="9274">MENGALNQGEGKDPSSFLSDIIGSRVIVKLNNSLVFKGELQSVDGYMNIALEKCEEWVHGKKKTVHGDAFVRGNNVMYISADDSA</sequence>
<dbReference type="EMBL" id="CH476642">
    <property type="protein sequence ID" value="EDN98045.1"/>
    <property type="status" value="ALT_SEQ"/>
    <property type="molecule type" value="Genomic_DNA"/>
</dbReference>
<dbReference type="RefSeq" id="XP_001586324.1">
    <property type="nucleotide sequence ID" value="XM_001586274.1"/>
</dbReference>
<dbReference type="SMR" id="A7F5M4"/>
<dbReference type="FunCoup" id="A7F5M4">
    <property type="interactions" value="732"/>
</dbReference>
<dbReference type="STRING" id="665079.A7F5M4"/>
<dbReference type="GeneID" id="5482289"/>
<dbReference type="KEGG" id="ssl:SS1G_12902"/>
<dbReference type="VEuPathDB" id="FungiDB:sscle_02g011990"/>
<dbReference type="InParanoid" id="A7F5M4"/>
<dbReference type="OrthoDB" id="268799at2759"/>
<dbReference type="Proteomes" id="UP000001312">
    <property type="component" value="Unassembled WGS sequence"/>
</dbReference>
<dbReference type="GO" id="GO:0005730">
    <property type="term" value="C:nucleolus"/>
    <property type="evidence" value="ECO:0000318"/>
    <property type="project" value="GO_Central"/>
</dbReference>
<dbReference type="GO" id="GO:0000932">
    <property type="term" value="C:P-body"/>
    <property type="evidence" value="ECO:0000318"/>
    <property type="project" value="GO_Central"/>
</dbReference>
<dbReference type="GO" id="GO:0005732">
    <property type="term" value="C:sno(s)RNA-containing ribonucleoprotein complex"/>
    <property type="evidence" value="ECO:0000318"/>
    <property type="project" value="GO_Central"/>
</dbReference>
<dbReference type="GO" id="GO:0005681">
    <property type="term" value="C:spliceosomal complex"/>
    <property type="evidence" value="ECO:0007669"/>
    <property type="project" value="UniProtKB-KW"/>
</dbReference>
<dbReference type="GO" id="GO:0046540">
    <property type="term" value="C:U4/U6 x U5 tri-snRNP complex"/>
    <property type="evidence" value="ECO:0000318"/>
    <property type="project" value="GO_Central"/>
</dbReference>
<dbReference type="GO" id="GO:0005688">
    <property type="term" value="C:U6 snRNP"/>
    <property type="evidence" value="ECO:0000318"/>
    <property type="project" value="GO_Central"/>
</dbReference>
<dbReference type="GO" id="GO:0003723">
    <property type="term" value="F:RNA binding"/>
    <property type="evidence" value="ECO:0000318"/>
    <property type="project" value="GO_Central"/>
</dbReference>
<dbReference type="GO" id="GO:0030490">
    <property type="term" value="P:maturation of SSU-rRNA"/>
    <property type="evidence" value="ECO:0000318"/>
    <property type="project" value="GO_Central"/>
</dbReference>
<dbReference type="GO" id="GO:0000398">
    <property type="term" value="P:mRNA splicing, via spliceosome"/>
    <property type="evidence" value="ECO:0000318"/>
    <property type="project" value="GO_Central"/>
</dbReference>
<dbReference type="GO" id="GO:0008033">
    <property type="term" value="P:tRNA processing"/>
    <property type="evidence" value="ECO:0007669"/>
    <property type="project" value="UniProtKB-KW"/>
</dbReference>
<dbReference type="CDD" id="cd01726">
    <property type="entry name" value="LSm6"/>
    <property type="match status" value="1"/>
</dbReference>
<dbReference type="FunFam" id="2.30.30.100:FF:000037">
    <property type="entry name" value="U6 snRNA-associated Sm-like protein LSm6"/>
    <property type="match status" value="1"/>
</dbReference>
<dbReference type="Gene3D" id="2.30.30.100">
    <property type="match status" value="1"/>
</dbReference>
<dbReference type="InterPro" id="IPR016487">
    <property type="entry name" value="Lsm6/sSmF"/>
</dbReference>
<dbReference type="InterPro" id="IPR010920">
    <property type="entry name" value="LSM_dom_sf"/>
</dbReference>
<dbReference type="InterPro" id="IPR047575">
    <property type="entry name" value="Sm"/>
</dbReference>
<dbReference type="InterPro" id="IPR001163">
    <property type="entry name" value="Sm_dom_euk/arc"/>
</dbReference>
<dbReference type="PANTHER" id="PTHR11021">
    <property type="entry name" value="SMALL NUCLEAR RIBONUCLEOPROTEIN F SNRNP-F"/>
    <property type="match status" value="1"/>
</dbReference>
<dbReference type="PANTHER" id="PTHR11021:SF1">
    <property type="entry name" value="U6 SNRNA-ASSOCIATED SM-LIKE PROTEIN LSM6"/>
    <property type="match status" value="1"/>
</dbReference>
<dbReference type="Pfam" id="PF01423">
    <property type="entry name" value="LSM"/>
    <property type="match status" value="1"/>
</dbReference>
<dbReference type="PIRSF" id="PIRSF006609">
    <property type="entry name" value="snRNP_SmF"/>
    <property type="match status" value="1"/>
</dbReference>
<dbReference type="SMART" id="SM00651">
    <property type="entry name" value="Sm"/>
    <property type="match status" value="1"/>
</dbReference>
<dbReference type="SUPFAM" id="SSF50182">
    <property type="entry name" value="Sm-like ribonucleoproteins"/>
    <property type="match status" value="1"/>
</dbReference>
<dbReference type="PROSITE" id="PS52002">
    <property type="entry name" value="SM"/>
    <property type="match status" value="1"/>
</dbReference>
<name>LSM6_SCLS1</name>
<gene>
    <name type="primary">lsm6</name>
    <name type="ORF">SS1G_12902</name>
</gene>